<feature type="chain" id="PRO_0000207258" description="Uncharacterized protein LA_2151">
    <location>
        <begin position="1"/>
        <end position="135"/>
    </location>
</feature>
<feature type="domain" description="Response regulatory" evidence="1">
    <location>
        <begin position="13"/>
        <end position="129"/>
    </location>
</feature>
<organism>
    <name type="scientific">Leptospira interrogans serogroup Icterohaemorrhagiae serovar Lai (strain 56601)</name>
    <dbReference type="NCBI Taxonomy" id="189518"/>
    <lineage>
        <taxon>Bacteria</taxon>
        <taxon>Pseudomonadati</taxon>
        <taxon>Spirochaetota</taxon>
        <taxon>Spirochaetia</taxon>
        <taxon>Leptospirales</taxon>
        <taxon>Leptospiraceae</taxon>
        <taxon>Leptospira</taxon>
    </lineage>
</organism>
<reference key="1">
    <citation type="journal article" date="1993" name="J. Gen. Microbiol.">
        <title>Cloning and analysis of the leuB gene of Leptospira interrogans serovar pomona.</title>
        <authorList>
            <person name="Ding M."/>
            <person name="Yelton D.B."/>
        </authorList>
    </citation>
    <scope>NUCLEOTIDE SEQUENCE [GENOMIC DNA]</scope>
    <source>
        <strain>Kenniwicki / Serogroup Pomona / Serovar pomona</strain>
    </source>
</reference>
<reference key="2">
    <citation type="journal article" date="2003" name="Nature">
        <title>Unique physiological and pathogenic features of Leptospira interrogans revealed by whole-genome sequencing.</title>
        <authorList>
            <person name="Ren S.-X."/>
            <person name="Fu G."/>
            <person name="Jiang X.-G."/>
            <person name="Zeng R."/>
            <person name="Miao Y.-G."/>
            <person name="Xu H."/>
            <person name="Zhang Y.-X."/>
            <person name="Xiong H."/>
            <person name="Lu G."/>
            <person name="Lu L.-F."/>
            <person name="Jiang H.-Q."/>
            <person name="Jia J."/>
            <person name="Tu Y.-F."/>
            <person name="Jiang J.-X."/>
            <person name="Gu W.-Y."/>
            <person name="Zhang Y.-Q."/>
            <person name="Cai Z."/>
            <person name="Sheng H.-H."/>
            <person name="Yin H.-F."/>
            <person name="Zhang Y."/>
            <person name="Zhu G.-F."/>
            <person name="Wan M."/>
            <person name="Huang H.-L."/>
            <person name="Qian Z."/>
            <person name="Wang S.-Y."/>
            <person name="Ma W."/>
            <person name="Yao Z.-J."/>
            <person name="Shen Y."/>
            <person name="Qiang B.-Q."/>
            <person name="Xia Q.-C."/>
            <person name="Guo X.-K."/>
            <person name="Danchin A."/>
            <person name="Saint Girons I."/>
            <person name="Somerville R.L."/>
            <person name="Wen Y.-M."/>
            <person name="Shi M.-H."/>
            <person name="Chen Z."/>
            <person name="Xu J.-G."/>
            <person name="Zhao G.-P."/>
        </authorList>
    </citation>
    <scope>NUCLEOTIDE SEQUENCE [LARGE SCALE GENOMIC DNA]</scope>
    <source>
        <strain>56601</strain>
    </source>
</reference>
<name>Y2151_LEPIN</name>
<dbReference type="EMBL" id="M59431">
    <property type="protein sequence ID" value="AAA72089.1"/>
    <property type="molecule type" value="Unassigned_DNA"/>
</dbReference>
<dbReference type="EMBL" id="AE010300">
    <property type="protein sequence ID" value="AAN49350.1"/>
    <property type="molecule type" value="Genomic_DNA"/>
</dbReference>
<dbReference type="RefSeq" id="NP_712332.1">
    <property type="nucleotide sequence ID" value="NC_004342.2"/>
</dbReference>
<dbReference type="RefSeq" id="WP_000643584.1">
    <property type="nucleotide sequence ID" value="NC_004342.2"/>
</dbReference>
<dbReference type="SMR" id="P24086"/>
<dbReference type="STRING" id="189518.LA_2151"/>
<dbReference type="PaxDb" id="189518-LA_2151"/>
<dbReference type="EnsemblBacteria" id="AAN49350">
    <property type="protein sequence ID" value="AAN49350"/>
    <property type="gene ID" value="LA_2151"/>
</dbReference>
<dbReference type="KEGG" id="lil:LA_2151"/>
<dbReference type="PATRIC" id="fig|189518.3.peg.2143"/>
<dbReference type="HOGENOM" id="CLU_000445_69_15_12"/>
<dbReference type="InParanoid" id="P24086"/>
<dbReference type="OrthoDB" id="9759232at2"/>
<dbReference type="PRO" id="PR:P24086"/>
<dbReference type="Proteomes" id="UP000001408">
    <property type="component" value="Chromosome I"/>
</dbReference>
<dbReference type="GO" id="GO:0000160">
    <property type="term" value="P:phosphorelay signal transduction system"/>
    <property type="evidence" value="ECO:0007669"/>
    <property type="project" value="InterPro"/>
</dbReference>
<dbReference type="CDD" id="cd17541">
    <property type="entry name" value="REC_CheB-like"/>
    <property type="match status" value="1"/>
</dbReference>
<dbReference type="Gene3D" id="3.40.50.2300">
    <property type="match status" value="1"/>
</dbReference>
<dbReference type="InterPro" id="IPR011006">
    <property type="entry name" value="CheY-like_superfamily"/>
</dbReference>
<dbReference type="InterPro" id="IPR001789">
    <property type="entry name" value="Sig_transdc_resp-reg_receiver"/>
</dbReference>
<dbReference type="InterPro" id="IPR052048">
    <property type="entry name" value="ST_Response_Regulator"/>
</dbReference>
<dbReference type="PANTHER" id="PTHR43228">
    <property type="entry name" value="TWO-COMPONENT RESPONSE REGULATOR"/>
    <property type="match status" value="1"/>
</dbReference>
<dbReference type="PANTHER" id="PTHR43228:SF1">
    <property type="entry name" value="TWO-COMPONENT RESPONSE REGULATOR ARR22"/>
    <property type="match status" value="1"/>
</dbReference>
<dbReference type="Pfam" id="PF00072">
    <property type="entry name" value="Response_reg"/>
    <property type="match status" value="1"/>
</dbReference>
<dbReference type="SMART" id="SM00448">
    <property type="entry name" value="REC"/>
    <property type="match status" value="1"/>
</dbReference>
<dbReference type="SUPFAM" id="SSF52172">
    <property type="entry name" value="CheY-like"/>
    <property type="match status" value="1"/>
</dbReference>
<dbReference type="PROSITE" id="PS50110">
    <property type="entry name" value="RESPONSE_REGULATORY"/>
    <property type="match status" value="1"/>
</dbReference>
<accession>P24086</accession>
<evidence type="ECO:0000255" key="1">
    <source>
        <dbReference type="PROSITE-ProRule" id="PRU00169"/>
    </source>
</evidence>
<proteinExistence type="predicted"/>
<keyword id="KW-1185">Reference proteome</keyword>
<gene>
    <name type="ordered locus">LA_2151</name>
</gene>
<protein>
    <recommendedName>
        <fullName>Uncharacterized protein LA_2151</fullName>
    </recommendedName>
    <alternativeName>
        <fullName>ORF 2</fullName>
    </alternativeName>
</protein>
<sequence length="135" mass="15076">MKAGVAPNGRPYQVLIAENSRFQAKQLAQILESEGYQVIGFAENGKELVKLYDEHRLVDLITLDLNLPVMDGYATFFEIKGKGVLPRIVIVSEENTPAVLKNLIDEGAMDYIPKPIKREKILEKVNAAIKKVPKV</sequence>